<keyword id="KW-0997">Cell inner membrane</keyword>
<keyword id="KW-1003">Cell membrane</keyword>
<keyword id="KW-0249">Electron transport</keyword>
<keyword id="KW-0472">Membrane</keyword>
<keyword id="KW-1185">Reference proteome</keyword>
<keyword id="KW-1278">Translocase</keyword>
<keyword id="KW-0812">Transmembrane</keyword>
<keyword id="KW-1133">Transmembrane helix</keyword>
<keyword id="KW-0813">Transport</keyword>
<accession>Q5P539</accession>
<feature type="chain" id="PRO_1000191710" description="Ion-translocating oxidoreductase complex subunit A">
    <location>
        <begin position="1"/>
        <end position="193"/>
    </location>
</feature>
<feature type="transmembrane region" description="Helical" evidence="1">
    <location>
        <begin position="5"/>
        <end position="25"/>
    </location>
</feature>
<feature type="transmembrane region" description="Helical" evidence="1">
    <location>
        <begin position="39"/>
        <end position="59"/>
    </location>
</feature>
<feature type="transmembrane region" description="Helical" evidence="1">
    <location>
        <begin position="62"/>
        <end position="82"/>
    </location>
</feature>
<feature type="transmembrane region" description="Helical" evidence="1">
    <location>
        <begin position="102"/>
        <end position="122"/>
    </location>
</feature>
<feature type="transmembrane region" description="Helical" evidence="1">
    <location>
        <begin position="134"/>
        <end position="154"/>
    </location>
</feature>
<feature type="transmembrane region" description="Helical" evidence="1">
    <location>
        <begin position="172"/>
        <end position="192"/>
    </location>
</feature>
<proteinExistence type="inferred from homology"/>
<evidence type="ECO:0000255" key="1">
    <source>
        <dbReference type="HAMAP-Rule" id="MF_00459"/>
    </source>
</evidence>
<comment type="function">
    <text evidence="1">Part of a membrane-bound complex that couples electron transfer with translocation of ions across the membrane.</text>
</comment>
<comment type="subunit">
    <text evidence="1">The complex is composed of six subunits: RnfA, RnfB, RnfC, RnfD, RnfE and RnfG.</text>
</comment>
<comment type="subcellular location">
    <subcellularLocation>
        <location evidence="1">Cell inner membrane</location>
        <topology evidence="1">Multi-pass membrane protein</topology>
    </subcellularLocation>
</comment>
<comment type="similarity">
    <text evidence="1">Belongs to the NqrDE/RnfAE family.</text>
</comment>
<sequence>MHEYALLLLSTALVNNVVLVKFLGLCPAMGVSKSMDAALGMGLATTFVITLAAAASWMLEHWLLAPFDLGFLRILSFILVIAAAVQFTEMAIRKMSPALYQSLGIYLPLITTNCAVLGVALLNVQQGYGFFKSVLFGFGSALGFTLVLLIFAGLRERLALASVPAAFAGAPAAFITISLLSLAFMGLSGLVAT</sequence>
<organism>
    <name type="scientific">Aromatoleum aromaticum (strain DSM 19018 / LMG 30748 / EbN1)</name>
    <name type="common">Azoarcus sp. (strain EbN1)</name>
    <dbReference type="NCBI Taxonomy" id="76114"/>
    <lineage>
        <taxon>Bacteria</taxon>
        <taxon>Pseudomonadati</taxon>
        <taxon>Pseudomonadota</taxon>
        <taxon>Betaproteobacteria</taxon>
        <taxon>Rhodocyclales</taxon>
        <taxon>Rhodocyclaceae</taxon>
        <taxon>Aromatoleum</taxon>
    </lineage>
</organism>
<protein>
    <recommendedName>
        <fullName evidence="1">Ion-translocating oxidoreductase complex subunit A</fullName>
        <ecNumber evidence="1">7.-.-.-</ecNumber>
    </recommendedName>
    <alternativeName>
        <fullName evidence="1">Rnf electron transport complex subunit A</fullName>
    </alternativeName>
</protein>
<dbReference type="EC" id="7.-.-.-" evidence="1"/>
<dbReference type="EMBL" id="CR555306">
    <property type="protein sequence ID" value="CAI07573.1"/>
    <property type="molecule type" value="Genomic_DNA"/>
</dbReference>
<dbReference type="RefSeq" id="WP_011237291.1">
    <property type="nucleotide sequence ID" value="NC_006513.1"/>
</dbReference>
<dbReference type="SMR" id="Q5P539"/>
<dbReference type="STRING" id="76114.ebA2575"/>
<dbReference type="KEGG" id="eba:ebA2575"/>
<dbReference type="eggNOG" id="COG4657">
    <property type="taxonomic scope" value="Bacteria"/>
</dbReference>
<dbReference type="HOGENOM" id="CLU_095255_1_0_4"/>
<dbReference type="OrthoDB" id="9803631at2"/>
<dbReference type="Proteomes" id="UP000006552">
    <property type="component" value="Chromosome"/>
</dbReference>
<dbReference type="GO" id="GO:0005886">
    <property type="term" value="C:plasma membrane"/>
    <property type="evidence" value="ECO:0007669"/>
    <property type="project" value="UniProtKB-SubCell"/>
</dbReference>
<dbReference type="GO" id="GO:0022900">
    <property type="term" value="P:electron transport chain"/>
    <property type="evidence" value="ECO:0007669"/>
    <property type="project" value="UniProtKB-UniRule"/>
</dbReference>
<dbReference type="HAMAP" id="MF_00459">
    <property type="entry name" value="RsxA_RnfA"/>
    <property type="match status" value="1"/>
</dbReference>
<dbReference type="InterPro" id="IPR011293">
    <property type="entry name" value="Ion_transpt_RnfA/RsxA"/>
</dbReference>
<dbReference type="InterPro" id="IPR003667">
    <property type="entry name" value="NqrDE/RnfAE"/>
</dbReference>
<dbReference type="InterPro" id="IPR050133">
    <property type="entry name" value="NqrDE/RnfAE_oxidrdctase"/>
</dbReference>
<dbReference type="NCBIfam" id="NF003481">
    <property type="entry name" value="PRK05151.1"/>
    <property type="match status" value="1"/>
</dbReference>
<dbReference type="NCBIfam" id="TIGR01943">
    <property type="entry name" value="rnfA"/>
    <property type="match status" value="1"/>
</dbReference>
<dbReference type="PANTHER" id="PTHR30335">
    <property type="entry name" value="INTEGRAL MEMBRANE PROTEIN OF SOXR-REDUCING COMPLEX"/>
    <property type="match status" value="1"/>
</dbReference>
<dbReference type="PANTHER" id="PTHR30335:SF0">
    <property type="entry name" value="ION-TRANSLOCATING OXIDOREDUCTASE COMPLEX SUBUNIT A"/>
    <property type="match status" value="1"/>
</dbReference>
<dbReference type="Pfam" id="PF02508">
    <property type="entry name" value="Rnf-Nqr"/>
    <property type="match status" value="1"/>
</dbReference>
<dbReference type="PIRSF" id="PIRSF006102">
    <property type="entry name" value="NQR_DE"/>
    <property type="match status" value="1"/>
</dbReference>
<gene>
    <name evidence="1" type="primary">rnfA</name>
    <name type="ordered locus">AZOSEA14480</name>
    <name type="ORF">ebA2575</name>
</gene>
<name>RNFA_AROAE</name>
<reference key="1">
    <citation type="journal article" date="2005" name="Arch. Microbiol.">
        <title>The genome sequence of an anaerobic aromatic-degrading denitrifying bacterium, strain EbN1.</title>
        <authorList>
            <person name="Rabus R."/>
            <person name="Kube M."/>
            <person name="Heider J."/>
            <person name="Beck A."/>
            <person name="Heitmann K."/>
            <person name="Widdel F."/>
            <person name="Reinhardt R."/>
        </authorList>
    </citation>
    <scope>NUCLEOTIDE SEQUENCE [LARGE SCALE GENOMIC DNA]</scope>
    <source>
        <strain>DSM 19018 / LMG 30748 / EbN1</strain>
    </source>
</reference>